<accession>Q68VV8</accession>
<proteinExistence type="inferred from homology"/>
<name>NUOK_RICTY</name>
<evidence type="ECO:0000255" key="1">
    <source>
        <dbReference type="HAMAP-Rule" id="MF_01456"/>
    </source>
</evidence>
<comment type="function">
    <text evidence="1">NDH-1 shuttles electrons from NADH, via FMN and iron-sulfur (Fe-S) centers, to quinones in the respiratory chain. The immediate electron acceptor for the enzyme in this species is believed to be ubiquinone. Couples the redox reaction to proton translocation (for every two electrons transferred, four hydrogen ions are translocated across the cytoplasmic membrane), and thus conserves the redox energy in a proton gradient.</text>
</comment>
<comment type="catalytic activity">
    <reaction evidence="1">
        <text>a quinone + NADH + 5 H(+)(in) = a quinol + NAD(+) + 4 H(+)(out)</text>
        <dbReference type="Rhea" id="RHEA:57888"/>
        <dbReference type="ChEBI" id="CHEBI:15378"/>
        <dbReference type="ChEBI" id="CHEBI:24646"/>
        <dbReference type="ChEBI" id="CHEBI:57540"/>
        <dbReference type="ChEBI" id="CHEBI:57945"/>
        <dbReference type="ChEBI" id="CHEBI:132124"/>
    </reaction>
</comment>
<comment type="subunit">
    <text evidence="1">NDH-1 is composed of 14 different subunits. Subunits NuoA, H, J, K, L, M, N constitute the membrane sector of the complex.</text>
</comment>
<comment type="subcellular location">
    <subcellularLocation>
        <location evidence="1">Cell inner membrane</location>
        <topology evidence="1">Multi-pass membrane protein</topology>
    </subcellularLocation>
</comment>
<comment type="similarity">
    <text evidence="1">Belongs to the complex I subunit 4L family.</text>
</comment>
<dbReference type="EC" id="7.1.1.-" evidence="1"/>
<dbReference type="EMBL" id="AE017197">
    <property type="protein sequence ID" value="AAU04234.1"/>
    <property type="molecule type" value="Genomic_DNA"/>
</dbReference>
<dbReference type="SMR" id="Q68VV8"/>
<dbReference type="KEGG" id="rty:RT0778"/>
<dbReference type="eggNOG" id="COG0713">
    <property type="taxonomic scope" value="Bacteria"/>
</dbReference>
<dbReference type="HOGENOM" id="CLU_144724_2_0_5"/>
<dbReference type="Proteomes" id="UP000000604">
    <property type="component" value="Chromosome"/>
</dbReference>
<dbReference type="GO" id="GO:0030964">
    <property type="term" value="C:NADH dehydrogenase complex"/>
    <property type="evidence" value="ECO:0007669"/>
    <property type="project" value="TreeGrafter"/>
</dbReference>
<dbReference type="GO" id="GO:0005886">
    <property type="term" value="C:plasma membrane"/>
    <property type="evidence" value="ECO:0007669"/>
    <property type="project" value="UniProtKB-SubCell"/>
</dbReference>
<dbReference type="GO" id="GO:0050136">
    <property type="term" value="F:NADH:ubiquinone reductase (non-electrogenic) activity"/>
    <property type="evidence" value="ECO:0007669"/>
    <property type="project" value="UniProtKB-UniRule"/>
</dbReference>
<dbReference type="GO" id="GO:0048038">
    <property type="term" value="F:quinone binding"/>
    <property type="evidence" value="ECO:0007669"/>
    <property type="project" value="UniProtKB-KW"/>
</dbReference>
<dbReference type="GO" id="GO:0042773">
    <property type="term" value="P:ATP synthesis coupled electron transport"/>
    <property type="evidence" value="ECO:0007669"/>
    <property type="project" value="InterPro"/>
</dbReference>
<dbReference type="FunFam" id="1.10.287.3510:FF:000001">
    <property type="entry name" value="NADH-quinone oxidoreductase subunit K"/>
    <property type="match status" value="1"/>
</dbReference>
<dbReference type="Gene3D" id="1.10.287.3510">
    <property type="match status" value="1"/>
</dbReference>
<dbReference type="HAMAP" id="MF_01456">
    <property type="entry name" value="NDH1_NuoK"/>
    <property type="match status" value="1"/>
</dbReference>
<dbReference type="InterPro" id="IPR001133">
    <property type="entry name" value="NADH_UbQ_OxRdtase_chain4L/K"/>
</dbReference>
<dbReference type="InterPro" id="IPR039428">
    <property type="entry name" value="NUOK/Mnh_C1-like"/>
</dbReference>
<dbReference type="NCBIfam" id="NF004320">
    <property type="entry name" value="PRK05715.1-2"/>
    <property type="match status" value="1"/>
</dbReference>
<dbReference type="NCBIfam" id="NF004321">
    <property type="entry name" value="PRK05715.1-3"/>
    <property type="match status" value="1"/>
</dbReference>
<dbReference type="NCBIfam" id="NF004323">
    <property type="entry name" value="PRK05715.1-5"/>
    <property type="match status" value="1"/>
</dbReference>
<dbReference type="PANTHER" id="PTHR11434:SF21">
    <property type="entry name" value="NADH DEHYDROGENASE SUBUNIT 4L-RELATED"/>
    <property type="match status" value="1"/>
</dbReference>
<dbReference type="PANTHER" id="PTHR11434">
    <property type="entry name" value="NADH-UBIQUINONE OXIDOREDUCTASE SUBUNIT ND4L"/>
    <property type="match status" value="1"/>
</dbReference>
<dbReference type="Pfam" id="PF00420">
    <property type="entry name" value="Oxidored_q2"/>
    <property type="match status" value="1"/>
</dbReference>
<feature type="chain" id="PRO_0000287848" description="NADH-quinone oxidoreductase subunit K">
    <location>
        <begin position="1"/>
        <end position="110"/>
    </location>
</feature>
<feature type="transmembrane region" description="Helical" evidence="1">
    <location>
        <begin position="13"/>
        <end position="33"/>
    </location>
</feature>
<feature type="transmembrane region" description="Helical" evidence="1">
    <location>
        <begin position="41"/>
        <end position="61"/>
    </location>
</feature>
<feature type="transmembrane region" description="Helical" evidence="1">
    <location>
        <begin position="73"/>
        <end position="93"/>
    </location>
</feature>
<reference key="1">
    <citation type="journal article" date="2004" name="J. Bacteriol.">
        <title>Complete genome sequence of Rickettsia typhi and comparison with sequences of other Rickettsiae.</title>
        <authorList>
            <person name="McLeod M.P."/>
            <person name="Qin X."/>
            <person name="Karpathy S.E."/>
            <person name="Gioia J."/>
            <person name="Highlander S.K."/>
            <person name="Fox G.E."/>
            <person name="McNeill T.Z."/>
            <person name="Jiang H."/>
            <person name="Muzny D."/>
            <person name="Jacob L.S."/>
            <person name="Hawes A.C."/>
            <person name="Sodergren E."/>
            <person name="Gill R."/>
            <person name="Hume J."/>
            <person name="Morgan M."/>
            <person name="Fan G."/>
            <person name="Amin A.G."/>
            <person name="Gibbs R.A."/>
            <person name="Hong C."/>
            <person name="Yu X.-J."/>
            <person name="Walker D.H."/>
            <person name="Weinstock G.M."/>
        </authorList>
    </citation>
    <scope>NUCLEOTIDE SEQUENCE [LARGE SCALE GENOMIC DNA]</scope>
    <source>
        <strain>ATCC VR-144 / Wilmington</strain>
    </source>
</reference>
<sequence length="110" mass="12446">MLKILNMNEYISLNHYLILSSLVFTIGMFGLFMHRKNIINILMSIELMLLAVNINFVAFSVYMQELSGQIFSIIILTVAAAETAIGLAILLIYFRNKGSIKITDINKMRG</sequence>
<gene>
    <name evidence="1" type="primary">nuoK</name>
    <name type="ordered locus">RT0778</name>
</gene>
<keyword id="KW-0997">Cell inner membrane</keyword>
<keyword id="KW-1003">Cell membrane</keyword>
<keyword id="KW-0472">Membrane</keyword>
<keyword id="KW-0520">NAD</keyword>
<keyword id="KW-0874">Quinone</keyword>
<keyword id="KW-1278">Translocase</keyword>
<keyword id="KW-0812">Transmembrane</keyword>
<keyword id="KW-1133">Transmembrane helix</keyword>
<keyword id="KW-0813">Transport</keyword>
<protein>
    <recommendedName>
        <fullName evidence="1">NADH-quinone oxidoreductase subunit K</fullName>
        <ecNumber evidence="1">7.1.1.-</ecNumber>
    </recommendedName>
    <alternativeName>
        <fullName evidence="1">NADH dehydrogenase I subunit K</fullName>
    </alternativeName>
    <alternativeName>
        <fullName evidence="1">NDH-1 subunit K</fullName>
    </alternativeName>
</protein>
<organism>
    <name type="scientific">Rickettsia typhi (strain ATCC VR-144 / Wilmington)</name>
    <dbReference type="NCBI Taxonomy" id="257363"/>
    <lineage>
        <taxon>Bacteria</taxon>
        <taxon>Pseudomonadati</taxon>
        <taxon>Pseudomonadota</taxon>
        <taxon>Alphaproteobacteria</taxon>
        <taxon>Rickettsiales</taxon>
        <taxon>Rickettsiaceae</taxon>
        <taxon>Rickettsieae</taxon>
        <taxon>Rickettsia</taxon>
        <taxon>typhus group</taxon>
    </lineage>
</organism>